<sequence>MDQKQIEEIVRSVMASMGQAAPAPSEAKCATTTCAAPVTSESCALDLGSAEAKAWIGVENPHRADVLTELRRSTVARVCTGRAGPRPRTQALLRFLADHSRSKDTVLKEVPEEWVKAQGLLEVRSEISDKNLYLTRPDMGRRLCAEAVEALKAQCVANPDVQVVISDGLSTDAITVNYEEILPPLMAGLKQAGLKVGTPFFVRYGRVKIEDQIGEILGAKVVILLVGERPGLGQSESLSCYAVYSPRMATTVEADRTCISNIHQGGTPPVEAAAVIVDLAKRMLEQKASGINMTR</sequence>
<organism>
    <name type="scientific">Escherichia coli O17:K52:H18 (strain UMN026 / ExPEC)</name>
    <dbReference type="NCBI Taxonomy" id="585056"/>
    <lineage>
        <taxon>Bacteria</taxon>
        <taxon>Pseudomonadati</taxon>
        <taxon>Pseudomonadota</taxon>
        <taxon>Gammaproteobacteria</taxon>
        <taxon>Enterobacterales</taxon>
        <taxon>Enterobacteriaceae</taxon>
        <taxon>Escherichia</taxon>
    </lineage>
</organism>
<reference key="1">
    <citation type="journal article" date="2009" name="PLoS Genet.">
        <title>Organised genome dynamics in the Escherichia coli species results in highly diverse adaptive paths.</title>
        <authorList>
            <person name="Touchon M."/>
            <person name="Hoede C."/>
            <person name="Tenaillon O."/>
            <person name="Barbe V."/>
            <person name="Baeriswyl S."/>
            <person name="Bidet P."/>
            <person name="Bingen E."/>
            <person name="Bonacorsi S."/>
            <person name="Bouchier C."/>
            <person name="Bouvet O."/>
            <person name="Calteau A."/>
            <person name="Chiapello H."/>
            <person name="Clermont O."/>
            <person name="Cruveiller S."/>
            <person name="Danchin A."/>
            <person name="Diard M."/>
            <person name="Dossat C."/>
            <person name="Karoui M.E."/>
            <person name="Frapy E."/>
            <person name="Garry L."/>
            <person name="Ghigo J.M."/>
            <person name="Gilles A.M."/>
            <person name="Johnson J."/>
            <person name="Le Bouguenec C."/>
            <person name="Lescat M."/>
            <person name="Mangenot S."/>
            <person name="Martinez-Jehanne V."/>
            <person name="Matic I."/>
            <person name="Nassif X."/>
            <person name="Oztas S."/>
            <person name="Petit M.A."/>
            <person name="Pichon C."/>
            <person name="Rouy Z."/>
            <person name="Ruf C.S."/>
            <person name="Schneider D."/>
            <person name="Tourret J."/>
            <person name="Vacherie B."/>
            <person name="Vallenet D."/>
            <person name="Medigue C."/>
            <person name="Rocha E.P.C."/>
            <person name="Denamur E."/>
        </authorList>
    </citation>
    <scope>NUCLEOTIDE SEQUENCE [LARGE SCALE GENOMIC DNA]</scope>
    <source>
        <strain>UMN026 / ExPEC</strain>
    </source>
</reference>
<protein>
    <recommendedName>
        <fullName evidence="1">Ethanolamine ammonia-lyase small subunit</fullName>
        <shortName evidence="1">EAL small subunit</shortName>
        <ecNumber evidence="1">4.3.1.7</ecNumber>
    </recommendedName>
</protein>
<feature type="chain" id="PRO_1000130090" description="Ethanolamine ammonia-lyase small subunit">
    <location>
        <begin position="1"/>
        <end position="295"/>
    </location>
</feature>
<feature type="binding site" evidence="1">
    <location>
        <position position="207"/>
    </location>
    <ligand>
        <name>adenosylcob(III)alamin</name>
        <dbReference type="ChEBI" id="CHEBI:18408"/>
    </ligand>
</feature>
<feature type="binding site" evidence="1">
    <location>
        <position position="228"/>
    </location>
    <ligand>
        <name>adenosylcob(III)alamin</name>
        <dbReference type="ChEBI" id="CHEBI:18408"/>
    </ligand>
</feature>
<feature type="binding site" evidence="1">
    <location>
        <position position="258"/>
    </location>
    <ligand>
        <name>adenosylcob(III)alamin</name>
        <dbReference type="ChEBI" id="CHEBI:18408"/>
    </ligand>
</feature>
<gene>
    <name evidence="1" type="primary">eutC</name>
    <name type="ordered locus">ECUMN_2761</name>
</gene>
<name>EUTC_ECOLU</name>
<accession>B7N630</accession>
<proteinExistence type="inferred from homology"/>
<comment type="function">
    <text evidence="1">Catalyzes the deamination of various vicinal amino-alcohols to oxo compounds. Allows this organism to utilize ethanolamine as the sole source of nitrogen and carbon in the presence of external vitamin B12.</text>
</comment>
<comment type="catalytic activity">
    <reaction evidence="1">
        <text>ethanolamine = acetaldehyde + NH4(+)</text>
        <dbReference type="Rhea" id="RHEA:15313"/>
        <dbReference type="ChEBI" id="CHEBI:15343"/>
        <dbReference type="ChEBI" id="CHEBI:28938"/>
        <dbReference type="ChEBI" id="CHEBI:57603"/>
        <dbReference type="EC" id="4.3.1.7"/>
    </reaction>
</comment>
<comment type="cofactor">
    <cofactor evidence="1">
        <name>adenosylcob(III)alamin</name>
        <dbReference type="ChEBI" id="CHEBI:18408"/>
    </cofactor>
    <text evidence="1">Binds between the large and small subunits.</text>
</comment>
<comment type="pathway">
    <text evidence="1">Amine and polyamine degradation; ethanolamine degradation.</text>
</comment>
<comment type="subunit">
    <text evidence="1">The basic unit is a heterodimer which dimerizes to form tetramers. The heterotetramers trimerize; 6 large subunits form a core ring with 6 small subunits projecting outwards.</text>
</comment>
<comment type="subcellular location">
    <subcellularLocation>
        <location evidence="1">Bacterial microcompartment</location>
    </subcellularLocation>
</comment>
<comment type="similarity">
    <text evidence="1">Belongs to the EutC family.</text>
</comment>
<evidence type="ECO:0000255" key="1">
    <source>
        <dbReference type="HAMAP-Rule" id="MF_00601"/>
    </source>
</evidence>
<keyword id="KW-1283">Bacterial microcompartment</keyword>
<keyword id="KW-0846">Cobalamin</keyword>
<keyword id="KW-0170">Cobalt</keyword>
<keyword id="KW-0456">Lyase</keyword>
<dbReference type="EC" id="4.3.1.7" evidence="1"/>
<dbReference type="EMBL" id="CU928163">
    <property type="protein sequence ID" value="CAR13939.1"/>
    <property type="molecule type" value="Genomic_DNA"/>
</dbReference>
<dbReference type="RefSeq" id="WP_000372321.1">
    <property type="nucleotide sequence ID" value="NC_011751.1"/>
</dbReference>
<dbReference type="RefSeq" id="YP_002413466.1">
    <property type="nucleotide sequence ID" value="NC_011751.1"/>
</dbReference>
<dbReference type="SMR" id="B7N630"/>
<dbReference type="STRING" id="585056.ECUMN_2761"/>
<dbReference type="KEGG" id="eum:ECUMN_2761"/>
<dbReference type="PATRIC" id="fig|585056.7.peg.2942"/>
<dbReference type="HOGENOM" id="CLU_068224_0_0_6"/>
<dbReference type="UniPathway" id="UPA00560"/>
<dbReference type="Proteomes" id="UP000007097">
    <property type="component" value="Chromosome"/>
</dbReference>
<dbReference type="GO" id="GO:0009350">
    <property type="term" value="C:ethanolamine ammonia-lyase complex"/>
    <property type="evidence" value="ECO:0007669"/>
    <property type="project" value="UniProtKB-UniRule"/>
</dbReference>
<dbReference type="GO" id="GO:0031471">
    <property type="term" value="C:ethanolamine degradation polyhedral organelle"/>
    <property type="evidence" value="ECO:0007669"/>
    <property type="project" value="UniProtKB-UniRule"/>
</dbReference>
<dbReference type="GO" id="GO:0031419">
    <property type="term" value="F:cobalamin binding"/>
    <property type="evidence" value="ECO:0007669"/>
    <property type="project" value="UniProtKB-UniRule"/>
</dbReference>
<dbReference type="GO" id="GO:0008851">
    <property type="term" value="F:ethanolamine ammonia-lyase activity"/>
    <property type="evidence" value="ECO:0007669"/>
    <property type="project" value="UniProtKB-UniRule"/>
</dbReference>
<dbReference type="GO" id="GO:0006520">
    <property type="term" value="P:amino acid metabolic process"/>
    <property type="evidence" value="ECO:0007669"/>
    <property type="project" value="InterPro"/>
</dbReference>
<dbReference type="GO" id="GO:0046336">
    <property type="term" value="P:ethanolamine catabolic process"/>
    <property type="evidence" value="ECO:0007669"/>
    <property type="project" value="UniProtKB-UniRule"/>
</dbReference>
<dbReference type="FunFam" id="3.40.50.11240:FF:000001">
    <property type="entry name" value="Ethanolamine ammonia-lyase light chain"/>
    <property type="match status" value="1"/>
</dbReference>
<dbReference type="Gene3D" id="6.10.140.690">
    <property type="match status" value="1"/>
</dbReference>
<dbReference type="Gene3D" id="6.10.250.2060">
    <property type="match status" value="1"/>
</dbReference>
<dbReference type="Gene3D" id="3.40.50.11240">
    <property type="entry name" value="Ethanolamine ammonia-lyase light chain (EutC)"/>
    <property type="match status" value="1"/>
</dbReference>
<dbReference type="HAMAP" id="MF_00601">
    <property type="entry name" value="EutC"/>
    <property type="match status" value="1"/>
</dbReference>
<dbReference type="InterPro" id="IPR009246">
    <property type="entry name" value="EutC"/>
</dbReference>
<dbReference type="InterPro" id="IPR042251">
    <property type="entry name" value="EutC_C"/>
</dbReference>
<dbReference type="NCBIfam" id="NF003971">
    <property type="entry name" value="PRK05465.1"/>
    <property type="match status" value="1"/>
</dbReference>
<dbReference type="PANTHER" id="PTHR39330">
    <property type="entry name" value="ETHANOLAMINE AMMONIA-LYASE LIGHT CHAIN"/>
    <property type="match status" value="1"/>
</dbReference>
<dbReference type="PANTHER" id="PTHR39330:SF1">
    <property type="entry name" value="ETHANOLAMINE AMMONIA-LYASE SMALL SUBUNIT"/>
    <property type="match status" value="1"/>
</dbReference>
<dbReference type="Pfam" id="PF05985">
    <property type="entry name" value="EutC"/>
    <property type="match status" value="1"/>
</dbReference>
<dbReference type="PIRSF" id="PIRSF018982">
    <property type="entry name" value="EutC"/>
    <property type="match status" value="1"/>
</dbReference>